<sequence>MAGHSKFKNIQHRKGAQDKKRAKVFTKLIREIVTAAKTGSSNNPENNPRLRNALTAARSQNLPKERIDKAINSANDSSNNENYTEIRYEGYAPNGIAIIVEALTDNKNRTAAEVRSSFTKYGGSLGETGSVNYLFNHCGVIQYPINIASNKDILEAVIEAGGHDIISDDTTHTIYTDIENFSKVLEFLTGKYGIPEDSYIGWIPLNTIIIDDKEKAEKLLKLVEVLEESDDVQRVFGNYELSDDVYEIIQGEP</sequence>
<feature type="chain" id="PRO_0000175878" description="Probable transcriptional regulatory protein RC0681">
    <location>
        <begin position="1"/>
        <end position="253"/>
    </location>
</feature>
<feature type="region of interest" description="Disordered" evidence="2">
    <location>
        <begin position="1"/>
        <end position="21"/>
    </location>
</feature>
<organism>
    <name type="scientific">Rickettsia conorii (strain ATCC VR-613 / Malish 7)</name>
    <dbReference type="NCBI Taxonomy" id="272944"/>
    <lineage>
        <taxon>Bacteria</taxon>
        <taxon>Pseudomonadati</taxon>
        <taxon>Pseudomonadota</taxon>
        <taxon>Alphaproteobacteria</taxon>
        <taxon>Rickettsiales</taxon>
        <taxon>Rickettsiaceae</taxon>
        <taxon>Rickettsieae</taxon>
        <taxon>Rickettsia</taxon>
        <taxon>spotted fever group</taxon>
    </lineage>
</organism>
<gene>
    <name type="ordered locus">RC0681</name>
</gene>
<dbReference type="EMBL" id="AE006914">
    <property type="protein sequence ID" value="AAL03219.1"/>
    <property type="status" value="ALT_INIT"/>
    <property type="molecule type" value="Genomic_DNA"/>
</dbReference>
<dbReference type="PIR" id="A97785">
    <property type="entry name" value="A97785"/>
</dbReference>
<dbReference type="RefSeq" id="WP_010977304.1">
    <property type="nucleotide sequence ID" value="NC_003103.1"/>
</dbReference>
<dbReference type="SMR" id="Q92HU0"/>
<dbReference type="GeneID" id="927712"/>
<dbReference type="KEGG" id="rco:RC0681"/>
<dbReference type="PATRIC" id="fig|272944.4.peg.774"/>
<dbReference type="HOGENOM" id="CLU_062974_2_2_5"/>
<dbReference type="Proteomes" id="UP000000816">
    <property type="component" value="Chromosome"/>
</dbReference>
<dbReference type="GO" id="GO:0005737">
    <property type="term" value="C:cytoplasm"/>
    <property type="evidence" value="ECO:0007669"/>
    <property type="project" value="UniProtKB-SubCell"/>
</dbReference>
<dbReference type="GO" id="GO:0003677">
    <property type="term" value="F:DNA binding"/>
    <property type="evidence" value="ECO:0007669"/>
    <property type="project" value="UniProtKB-UniRule"/>
</dbReference>
<dbReference type="GO" id="GO:0006355">
    <property type="term" value="P:regulation of DNA-templated transcription"/>
    <property type="evidence" value="ECO:0007669"/>
    <property type="project" value="UniProtKB-UniRule"/>
</dbReference>
<dbReference type="FunFam" id="1.10.10.200:FF:000002">
    <property type="entry name" value="Probable transcriptional regulatory protein CLM62_37755"/>
    <property type="match status" value="1"/>
</dbReference>
<dbReference type="Gene3D" id="1.10.10.200">
    <property type="match status" value="1"/>
</dbReference>
<dbReference type="Gene3D" id="3.30.70.980">
    <property type="match status" value="2"/>
</dbReference>
<dbReference type="HAMAP" id="MF_00693">
    <property type="entry name" value="Transcrip_reg_TACO1"/>
    <property type="match status" value="1"/>
</dbReference>
<dbReference type="InterPro" id="IPR017856">
    <property type="entry name" value="Integrase-like_N"/>
</dbReference>
<dbReference type="InterPro" id="IPR048300">
    <property type="entry name" value="TACO1_YebC-like_2nd/3rd_dom"/>
</dbReference>
<dbReference type="InterPro" id="IPR049083">
    <property type="entry name" value="TACO1_YebC_N"/>
</dbReference>
<dbReference type="InterPro" id="IPR002876">
    <property type="entry name" value="Transcrip_reg_TACO1-like"/>
</dbReference>
<dbReference type="InterPro" id="IPR026564">
    <property type="entry name" value="Transcrip_reg_TACO1-like_dom3"/>
</dbReference>
<dbReference type="InterPro" id="IPR029072">
    <property type="entry name" value="YebC-like"/>
</dbReference>
<dbReference type="NCBIfam" id="NF001030">
    <property type="entry name" value="PRK00110.1"/>
    <property type="match status" value="1"/>
</dbReference>
<dbReference type="NCBIfam" id="NF009044">
    <property type="entry name" value="PRK12378.1"/>
    <property type="match status" value="1"/>
</dbReference>
<dbReference type="NCBIfam" id="TIGR01033">
    <property type="entry name" value="YebC/PmpR family DNA-binding transcriptional regulator"/>
    <property type="match status" value="1"/>
</dbReference>
<dbReference type="PANTHER" id="PTHR12532:SF11">
    <property type="match status" value="1"/>
</dbReference>
<dbReference type="PANTHER" id="PTHR12532">
    <property type="entry name" value="TRANSLATIONAL ACTIVATOR OF CYTOCHROME C OXIDASE 1"/>
    <property type="match status" value="1"/>
</dbReference>
<dbReference type="Pfam" id="PF20772">
    <property type="entry name" value="TACO1_YebC_N"/>
    <property type="match status" value="1"/>
</dbReference>
<dbReference type="Pfam" id="PF01709">
    <property type="entry name" value="Transcrip_reg"/>
    <property type="match status" value="1"/>
</dbReference>
<dbReference type="SUPFAM" id="SSF75625">
    <property type="entry name" value="YebC-like"/>
    <property type="match status" value="1"/>
</dbReference>
<keyword id="KW-0963">Cytoplasm</keyword>
<keyword id="KW-0238">DNA-binding</keyword>
<keyword id="KW-0804">Transcription</keyword>
<keyword id="KW-0805">Transcription regulation</keyword>
<comment type="subcellular location">
    <subcellularLocation>
        <location evidence="1">Cytoplasm</location>
    </subcellularLocation>
</comment>
<comment type="similarity">
    <text evidence="1">Belongs to the TACO1 family.</text>
</comment>
<comment type="sequence caution" evidence="3">
    <conflict type="erroneous initiation">
        <sequence resource="EMBL-CDS" id="AAL03219"/>
    </conflict>
</comment>
<evidence type="ECO:0000255" key="1">
    <source>
        <dbReference type="HAMAP-Rule" id="MF_00693"/>
    </source>
</evidence>
<evidence type="ECO:0000256" key="2">
    <source>
        <dbReference type="SAM" id="MobiDB-lite"/>
    </source>
</evidence>
<evidence type="ECO:0000305" key="3"/>
<protein>
    <recommendedName>
        <fullName evidence="1">Probable transcriptional regulatory protein RC0681</fullName>
    </recommendedName>
</protein>
<reference key="1">
    <citation type="journal article" date="2001" name="Science">
        <title>Mechanisms of evolution in Rickettsia conorii and R. prowazekii.</title>
        <authorList>
            <person name="Ogata H."/>
            <person name="Audic S."/>
            <person name="Renesto-Audiffren P."/>
            <person name="Fournier P.-E."/>
            <person name="Barbe V."/>
            <person name="Samson D."/>
            <person name="Roux V."/>
            <person name="Cossart P."/>
            <person name="Weissenbach J."/>
            <person name="Claverie J.-M."/>
            <person name="Raoult D."/>
        </authorList>
    </citation>
    <scope>NUCLEOTIDE SEQUENCE [LARGE SCALE GENOMIC DNA]</scope>
    <source>
        <strain>ATCC VR-613 / Malish 7</strain>
    </source>
</reference>
<proteinExistence type="inferred from homology"/>
<name>Y681_RICCN</name>
<accession>Q92HU0</accession>